<accession>Q7SA88</accession>
<comment type="function">
    <text evidence="6">Component of the mitochondrial ribosome (mitoribosome), a dedicated translation machinery responsible for the synthesis of mitochondrial genome-encoded proteins, including at least some of the essential transmembrane subunits of the mitochondrial respiratory chain. The mitoribosomes are attached to the mitochondrial inner membrane and translation products are cotranslationally integrated into the membrane.</text>
</comment>
<comment type="subunit">
    <text evidence="2 3">Component of the mitochondrial large ribosomal subunit (mt-LSU). Mature N.crassa 74S mitochondrial ribosomes consist of a small (37S) and a large (54S) subunit. The 37S small subunit contains a 16S ribosomal RNA (16S mt-rRNA) and 32 different proteins. The 54S large subunit contains a 23S rRNA (23S mt-rRNA) and 42 different proteins. mL44 forms a heterodimer with mL57 and stabilizes rRNA expansion segments 1/2 at a membrane-facing protuberance close to the point of attachment of the ribosome to the translocon in the membrane.</text>
</comment>
<comment type="subcellular location">
    <subcellularLocation>
        <location evidence="2 3">Mitochondrion</location>
    </subcellularLocation>
</comment>
<comment type="similarity">
    <text evidence="5">Belongs to the ribonuclease III family. Mitochondrion-specific ribosomal protein mL44 subfamily.</text>
</comment>
<proteinExistence type="evidence at protein level"/>
<sequence length="439" mass="48047">MKRIATPSLTSRLLVAARSGVSPATAAIRSRSAISVRSQSTAALAQHDASHDLNNDRFPPLEPLPPAAESLPSPLPERALTSAKLAALHARLNLSPKIPLQTLARTLVDASADENPQFNNANLAFVGQTLINYHIAEWLLCKYPRLPQGILFSAMKAYAGPKPLLQIARSWGVDTAAVPGGEVDPGLLQFDALKPGVAITNFGYKRTELAYLEKFKWRRGMASRVVLDDDFGDVVRSDPKVAADLEKAMEEQDQDKTPDEEEAEMVANEQDQDVSYDRYGNPDTRAAAERAHAYFVRAVVGAIYAHCGREAAKAFVKAHIMSRTLDIAKLFEFKYPTRELAALCAREDFEPPVARLLSETGRQSRTPVFVVGIYSGSDKLGEGAASSLDHARFKAAMNALKAWYLYSPGENPRVPSDMLEEGAKPWTPAYIDMGEVISR</sequence>
<protein>
    <recommendedName>
        <fullName evidence="4">Large ribosomal subunit protein mL44</fullName>
    </recommendedName>
</protein>
<evidence type="ECO:0000256" key="1">
    <source>
        <dbReference type="SAM" id="MobiDB-lite"/>
    </source>
</evidence>
<evidence type="ECO:0000269" key="2">
    <source>
    </source>
</evidence>
<evidence type="ECO:0000269" key="3">
    <source>
    </source>
</evidence>
<evidence type="ECO:0000303" key="4">
    <source>
    </source>
</evidence>
<evidence type="ECO:0000305" key="5"/>
<evidence type="ECO:0000305" key="6">
    <source>
    </source>
</evidence>
<evidence type="ECO:0007744" key="7">
    <source>
        <dbReference type="PDB" id="6YWS"/>
    </source>
</evidence>
<evidence type="ECO:0007744" key="8">
    <source>
        <dbReference type="PDB" id="6YWV"/>
    </source>
</evidence>
<gene>
    <name type="primary">mrpl3</name>
    <name type="ORF">NCU08299</name>
</gene>
<dbReference type="EMBL" id="CM002239">
    <property type="protein sequence ID" value="EAA33276.1"/>
    <property type="molecule type" value="Genomic_DNA"/>
</dbReference>
<dbReference type="RefSeq" id="XP_962512.1">
    <property type="nucleotide sequence ID" value="XM_957419.2"/>
</dbReference>
<dbReference type="PDB" id="6YWS">
    <property type="method" value="EM"/>
    <property type="resolution" value="2.74 A"/>
    <property type="chains" value="5=1-439"/>
</dbReference>
<dbReference type="PDB" id="6YWV">
    <property type="method" value="EM"/>
    <property type="resolution" value="3.03 A"/>
    <property type="chains" value="5=1-439"/>
</dbReference>
<dbReference type="PDB" id="6YWX">
    <property type="method" value="EM"/>
    <property type="resolution" value="3.10 A"/>
    <property type="chains" value="5=1-439"/>
</dbReference>
<dbReference type="PDBsum" id="6YWS"/>
<dbReference type="PDBsum" id="6YWV"/>
<dbReference type="PDBsum" id="6YWX"/>
<dbReference type="EMDB" id="EMD-10973"/>
<dbReference type="EMDB" id="EMD-10977"/>
<dbReference type="EMDB" id="EMD-10978"/>
<dbReference type="SMR" id="Q7SA88"/>
<dbReference type="FunCoup" id="Q7SA88">
    <property type="interactions" value="385"/>
</dbReference>
<dbReference type="STRING" id="367110.Q7SA88"/>
<dbReference type="PaxDb" id="5141-EFNCRP00000008429"/>
<dbReference type="EnsemblFungi" id="EAA33276">
    <property type="protein sequence ID" value="EAA33276"/>
    <property type="gene ID" value="NCU08299"/>
</dbReference>
<dbReference type="GeneID" id="3878653"/>
<dbReference type="KEGG" id="ncr:NCU08299"/>
<dbReference type="VEuPathDB" id="FungiDB:NCU08299"/>
<dbReference type="HOGENOM" id="CLU_034765_3_0_1"/>
<dbReference type="InParanoid" id="Q7SA88"/>
<dbReference type="OMA" id="YLYSPGN"/>
<dbReference type="OrthoDB" id="67027at2759"/>
<dbReference type="Proteomes" id="UP000001805">
    <property type="component" value="Chromosome 4, Linkage Group IV"/>
</dbReference>
<dbReference type="GO" id="GO:0005739">
    <property type="term" value="C:mitochondrion"/>
    <property type="evidence" value="ECO:0000318"/>
    <property type="project" value="GO_Central"/>
</dbReference>
<dbReference type="GO" id="GO:1990904">
    <property type="term" value="C:ribonucleoprotein complex"/>
    <property type="evidence" value="ECO:0007669"/>
    <property type="project" value="UniProtKB-KW"/>
</dbReference>
<dbReference type="GO" id="GO:0005840">
    <property type="term" value="C:ribosome"/>
    <property type="evidence" value="ECO:0007669"/>
    <property type="project" value="UniProtKB-KW"/>
</dbReference>
<dbReference type="GO" id="GO:0003725">
    <property type="term" value="F:double-stranded RNA binding"/>
    <property type="evidence" value="ECO:0007669"/>
    <property type="project" value="InterPro"/>
</dbReference>
<dbReference type="GO" id="GO:0004525">
    <property type="term" value="F:ribonuclease III activity"/>
    <property type="evidence" value="ECO:0007669"/>
    <property type="project" value="InterPro"/>
</dbReference>
<dbReference type="GO" id="GO:0003735">
    <property type="term" value="F:structural constituent of ribosome"/>
    <property type="evidence" value="ECO:0000318"/>
    <property type="project" value="GO_Central"/>
</dbReference>
<dbReference type="GO" id="GO:0006396">
    <property type="term" value="P:RNA processing"/>
    <property type="evidence" value="ECO:0007669"/>
    <property type="project" value="InterPro"/>
</dbReference>
<dbReference type="CDD" id="cd19873">
    <property type="entry name" value="DSRM_MRPL3_like"/>
    <property type="match status" value="1"/>
</dbReference>
<dbReference type="FunFam" id="3.30.160.20:FF:000043">
    <property type="entry name" value="60S ribosomal protein L3"/>
    <property type="match status" value="1"/>
</dbReference>
<dbReference type="Gene3D" id="3.30.160.20">
    <property type="match status" value="1"/>
</dbReference>
<dbReference type="Gene3D" id="1.10.1520.10">
    <property type="entry name" value="Ribonuclease III domain"/>
    <property type="match status" value="1"/>
</dbReference>
<dbReference type="InterPro" id="IPR014720">
    <property type="entry name" value="dsRBD_dom"/>
</dbReference>
<dbReference type="InterPro" id="IPR044443">
    <property type="entry name" value="Ribosomal_mL44_DSRM_fung"/>
</dbReference>
<dbReference type="InterPro" id="IPR000999">
    <property type="entry name" value="RNase_III_dom"/>
</dbReference>
<dbReference type="InterPro" id="IPR036389">
    <property type="entry name" value="RNase_III_sf"/>
</dbReference>
<dbReference type="PANTHER" id="PTHR11207:SF32">
    <property type="entry name" value="LARGE RIBOSOMAL SUBUNIT PROTEIN ML44"/>
    <property type="match status" value="1"/>
</dbReference>
<dbReference type="PANTHER" id="PTHR11207">
    <property type="entry name" value="RIBONUCLEASE III"/>
    <property type="match status" value="1"/>
</dbReference>
<dbReference type="Pfam" id="PF00035">
    <property type="entry name" value="dsrm"/>
    <property type="match status" value="1"/>
</dbReference>
<dbReference type="SMART" id="SM00358">
    <property type="entry name" value="DSRM"/>
    <property type="match status" value="1"/>
</dbReference>
<dbReference type="SMART" id="SM00535">
    <property type="entry name" value="RIBOc"/>
    <property type="match status" value="1"/>
</dbReference>
<dbReference type="SUPFAM" id="SSF54768">
    <property type="entry name" value="dsRNA-binding domain-like"/>
    <property type="match status" value="1"/>
</dbReference>
<dbReference type="SUPFAM" id="SSF69065">
    <property type="entry name" value="RNase III domain-like"/>
    <property type="match status" value="1"/>
</dbReference>
<dbReference type="PROSITE" id="PS50142">
    <property type="entry name" value="RNASE_3_2"/>
    <property type="match status" value="1"/>
</dbReference>
<name>RM03_NEUCR</name>
<organism>
    <name type="scientific">Neurospora crassa (strain ATCC 24698 / 74-OR23-1A / CBS 708.71 / DSM 1257 / FGSC 987)</name>
    <dbReference type="NCBI Taxonomy" id="367110"/>
    <lineage>
        <taxon>Eukaryota</taxon>
        <taxon>Fungi</taxon>
        <taxon>Dikarya</taxon>
        <taxon>Ascomycota</taxon>
        <taxon>Pezizomycotina</taxon>
        <taxon>Sordariomycetes</taxon>
        <taxon>Sordariomycetidae</taxon>
        <taxon>Sordariales</taxon>
        <taxon>Sordariaceae</taxon>
        <taxon>Neurospora</taxon>
    </lineage>
</organism>
<feature type="chain" id="PRO_0000458590" description="Large ribosomal subunit protein mL44">
    <location>
        <begin position="1"/>
        <end position="439"/>
    </location>
</feature>
<feature type="region of interest" description="Disordered" evidence="1">
    <location>
        <begin position="39"/>
        <end position="73"/>
    </location>
</feature>
<feature type="region of interest" description="Disordered" evidence="1">
    <location>
        <begin position="247"/>
        <end position="282"/>
    </location>
</feature>
<feature type="compositionally biased region" description="Basic and acidic residues" evidence="1">
    <location>
        <begin position="247"/>
        <end position="257"/>
    </location>
</feature>
<feature type="compositionally biased region" description="Acidic residues" evidence="1">
    <location>
        <begin position="258"/>
        <end position="274"/>
    </location>
</feature>
<keyword id="KW-0002">3D-structure</keyword>
<keyword id="KW-0496">Mitochondrion</keyword>
<keyword id="KW-1185">Reference proteome</keyword>
<keyword id="KW-0687">Ribonucleoprotein</keyword>
<keyword id="KW-0689">Ribosomal protein</keyword>
<keyword id="KW-0694">RNA-binding</keyword>
<reference key="1">
    <citation type="journal article" date="2003" name="Nature">
        <title>The genome sequence of the filamentous fungus Neurospora crassa.</title>
        <authorList>
            <person name="Galagan J.E."/>
            <person name="Calvo S.E."/>
            <person name="Borkovich K.A."/>
            <person name="Selker E.U."/>
            <person name="Read N.D."/>
            <person name="Jaffe D.B."/>
            <person name="FitzHugh W."/>
            <person name="Ma L.-J."/>
            <person name="Smirnov S."/>
            <person name="Purcell S."/>
            <person name="Rehman B."/>
            <person name="Elkins T."/>
            <person name="Engels R."/>
            <person name="Wang S."/>
            <person name="Nielsen C.B."/>
            <person name="Butler J."/>
            <person name="Endrizzi M."/>
            <person name="Qui D."/>
            <person name="Ianakiev P."/>
            <person name="Bell-Pedersen D."/>
            <person name="Nelson M.A."/>
            <person name="Werner-Washburne M."/>
            <person name="Selitrennikoff C.P."/>
            <person name="Kinsey J.A."/>
            <person name="Braun E.L."/>
            <person name="Zelter A."/>
            <person name="Schulte U."/>
            <person name="Kothe G.O."/>
            <person name="Jedd G."/>
            <person name="Mewes H.-W."/>
            <person name="Staben C."/>
            <person name="Marcotte E."/>
            <person name="Greenberg D."/>
            <person name="Roy A."/>
            <person name="Foley K."/>
            <person name="Naylor J."/>
            <person name="Stange-Thomann N."/>
            <person name="Barrett R."/>
            <person name="Gnerre S."/>
            <person name="Kamal M."/>
            <person name="Kamvysselis M."/>
            <person name="Mauceli E.W."/>
            <person name="Bielke C."/>
            <person name="Rudd S."/>
            <person name="Frishman D."/>
            <person name="Krystofova S."/>
            <person name="Rasmussen C."/>
            <person name="Metzenberg R.L."/>
            <person name="Perkins D.D."/>
            <person name="Kroken S."/>
            <person name="Cogoni C."/>
            <person name="Macino G."/>
            <person name="Catcheside D.E.A."/>
            <person name="Li W."/>
            <person name="Pratt R.J."/>
            <person name="Osmani S.A."/>
            <person name="DeSouza C.P.C."/>
            <person name="Glass N.L."/>
            <person name="Orbach M.J."/>
            <person name="Berglund J.A."/>
            <person name="Voelker R."/>
            <person name="Yarden O."/>
            <person name="Plamann M."/>
            <person name="Seiler S."/>
            <person name="Dunlap J.C."/>
            <person name="Radford A."/>
            <person name="Aramayo R."/>
            <person name="Natvig D.O."/>
            <person name="Alex L.A."/>
            <person name="Mannhaupt G."/>
            <person name="Ebbole D.J."/>
            <person name="Freitag M."/>
            <person name="Paulsen I."/>
            <person name="Sachs M.S."/>
            <person name="Lander E.S."/>
            <person name="Nusbaum C."/>
            <person name="Birren B.W."/>
        </authorList>
    </citation>
    <scope>NUCLEOTIDE SEQUENCE [LARGE SCALE GENOMIC DNA]</scope>
    <source>
        <strain>ATCC 24698 / 74-OR23-1A / CBS 708.71 / DSM 1257 / FGSC 987</strain>
    </source>
</reference>
<reference key="2">
    <citation type="journal article" date="2006" name="FEMS Microbiol. Lett.">
        <title>Identification and comparative analysis of the large subunit mitochondrial ribosomal proteins of Neurospora crassa.</title>
        <authorList>
            <person name="Gan X."/>
            <person name="Arita K."/>
            <person name="Isono S."/>
            <person name="Kitakawa M."/>
            <person name="Yoshino K."/>
            <person name="Yonezawa K."/>
            <person name="Kato A."/>
            <person name="Inoue H."/>
            <person name="Isono K."/>
        </authorList>
    </citation>
    <scope>IDENTIFICATION IN THE MITOCHONDRIAL RIBOSOMAL LARGE COMPLEX</scope>
    <scope>IDENTIFICATION BY MASS SPECTROMETRY</scope>
</reference>
<reference evidence="7 8" key="3">
    <citation type="journal article" date="2020" name="Nat. Commun.">
        <title>Analysis of translating mitoribosome reveals functional characteristics of translation in mitochondria of fungi.</title>
        <authorList>
            <person name="Itoh Y."/>
            <person name="Naschberger A."/>
            <person name="Mortezaei N."/>
            <person name="Herrmann J.M."/>
            <person name="Amunts A."/>
        </authorList>
    </citation>
    <scope>STRUCTURE BY ELECTRON MICROSCOPY (2.74 ANGSTROMS)</scope>
</reference>